<feature type="chain" id="PRO_0000276633" description="Small ribosomal subunit protein uS12c">
    <location>
        <begin position="1"/>
        <end position="123"/>
    </location>
</feature>
<feature type="region of interest" description="Disordered" evidence="2">
    <location>
        <begin position="1"/>
        <end position="23"/>
    </location>
</feature>
<feature type="compositionally biased region" description="Polar residues" evidence="2">
    <location>
        <begin position="1"/>
        <end position="16"/>
    </location>
</feature>
<sequence>MPTIQQLIRNSRQPAENRTKSPALRACPQRRGVCTRVYTTTPKKPNSALRKVARVRLTSGFEVTAYIPGIGHNLQEHSVILVRGGRVKDLPGVRYHIVRGTLDAVGVKDRRQGRSKYGVKRPK</sequence>
<proteinExistence type="inferred from homology"/>
<organism>
    <name type="scientific">Staurastrum punctulatum</name>
    <name type="common">Green alga</name>
    <name type="synonym">Cosmoastrum punctulatum</name>
    <dbReference type="NCBI Taxonomy" id="102822"/>
    <lineage>
        <taxon>Eukaryota</taxon>
        <taxon>Viridiplantae</taxon>
        <taxon>Streptophyta</taxon>
        <taxon>Zygnematophyceae</taxon>
        <taxon>Zygnematophycidae</taxon>
        <taxon>Desmidiales</taxon>
        <taxon>Desmidiaceae</taxon>
        <taxon>Staurastrum</taxon>
    </lineage>
</organism>
<name>RR12_STAPU</name>
<evidence type="ECO:0000250" key="1"/>
<evidence type="ECO:0000256" key="2">
    <source>
        <dbReference type="SAM" id="MobiDB-lite"/>
    </source>
</evidence>
<evidence type="ECO:0000305" key="3"/>
<gene>
    <name type="primary">rps12</name>
</gene>
<geneLocation type="chloroplast"/>
<comment type="function">
    <text evidence="1">With S4 and S5 plays an important role in translational accuracy. Located at the interface of the 30S and 50S subunits (By similarity).</text>
</comment>
<comment type="subunit">
    <text evidence="1">Part of the 30S ribosomal subunit.</text>
</comment>
<comment type="subcellular location">
    <subcellularLocation>
        <location>Plastid</location>
        <location>Chloroplast</location>
    </subcellularLocation>
</comment>
<comment type="similarity">
    <text evidence="3">Belongs to the universal ribosomal protein uS12 family.</text>
</comment>
<reference key="1">
    <citation type="journal article" date="2005" name="BMC Biol.">
        <title>The complete chloroplast DNA sequences of the charophycean green algae Staurastrum and Zygnema reveal that the chloroplast genome underwent extensive changes during the evolution of the Zygnematales.</title>
        <authorList>
            <person name="Turmel M."/>
            <person name="Otis C."/>
            <person name="Lemieux C."/>
        </authorList>
    </citation>
    <scope>NUCLEOTIDE SEQUENCE [LARGE SCALE GENOMIC DNA]</scope>
</reference>
<keyword id="KW-0150">Chloroplast</keyword>
<keyword id="KW-0934">Plastid</keyword>
<keyword id="KW-0687">Ribonucleoprotein</keyword>
<keyword id="KW-0689">Ribosomal protein</keyword>
<keyword id="KW-0694">RNA-binding</keyword>
<keyword id="KW-0699">rRNA-binding</keyword>
<accession>Q32S12</accession>
<dbReference type="EMBL" id="AY958085">
    <property type="protein sequence ID" value="AAX45751.1"/>
    <property type="molecule type" value="Genomic_DNA"/>
</dbReference>
<dbReference type="RefSeq" id="YP_636364.1">
    <property type="nucleotide sequence ID" value="NC_008116.1"/>
</dbReference>
<dbReference type="SMR" id="Q32S12"/>
<dbReference type="GeneID" id="4108613"/>
<dbReference type="GO" id="GO:0009507">
    <property type="term" value="C:chloroplast"/>
    <property type="evidence" value="ECO:0007669"/>
    <property type="project" value="UniProtKB-SubCell"/>
</dbReference>
<dbReference type="GO" id="GO:0015935">
    <property type="term" value="C:small ribosomal subunit"/>
    <property type="evidence" value="ECO:0007669"/>
    <property type="project" value="InterPro"/>
</dbReference>
<dbReference type="GO" id="GO:0019843">
    <property type="term" value="F:rRNA binding"/>
    <property type="evidence" value="ECO:0007669"/>
    <property type="project" value="UniProtKB-UniRule"/>
</dbReference>
<dbReference type="GO" id="GO:0003735">
    <property type="term" value="F:structural constituent of ribosome"/>
    <property type="evidence" value="ECO:0007669"/>
    <property type="project" value="InterPro"/>
</dbReference>
<dbReference type="GO" id="GO:0006412">
    <property type="term" value="P:translation"/>
    <property type="evidence" value="ECO:0007669"/>
    <property type="project" value="UniProtKB-UniRule"/>
</dbReference>
<dbReference type="CDD" id="cd03368">
    <property type="entry name" value="Ribosomal_S12"/>
    <property type="match status" value="1"/>
</dbReference>
<dbReference type="FunFam" id="2.40.50.140:FF:000008">
    <property type="entry name" value="30S ribosomal protein S12, chloroplastic"/>
    <property type="match status" value="1"/>
</dbReference>
<dbReference type="Gene3D" id="2.40.50.140">
    <property type="entry name" value="Nucleic acid-binding proteins"/>
    <property type="match status" value="1"/>
</dbReference>
<dbReference type="HAMAP" id="MF_00403_B">
    <property type="entry name" value="Ribosomal_uS12_B"/>
    <property type="match status" value="1"/>
</dbReference>
<dbReference type="InterPro" id="IPR012340">
    <property type="entry name" value="NA-bd_OB-fold"/>
</dbReference>
<dbReference type="InterPro" id="IPR006032">
    <property type="entry name" value="Ribosomal_uS12"/>
</dbReference>
<dbReference type="InterPro" id="IPR005679">
    <property type="entry name" value="Ribosomal_uS12_bac"/>
</dbReference>
<dbReference type="NCBIfam" id="TIGR00981">
    <property type="entry name" value="rpsL_bact"/>
    <property type="match status" value="1"/>
</dbReference>
<dbReference type="PANTHER" id="PTHR11652">
    <property type="entry name" value="30S RIBOSOMAL PROTEIN S12 FAMILY MEMBER"/>
    <property type="match status" value="1"/>
</dbReference>
<dbReference type="Pfam" id="PF00164">
    <property type="entry name" value="Ribosom_S12_S23"/>
    <property type="match status" value="1"/>
</dbReference>
<dbReference type="PIRSF" id="PIRSF002133">
    <property type="entry name" value="Ribosomal_S12/S23"/>
    <property type="match status" value="1"/>
</dbReference>
<dbReference type="PRINTS" id="PR01034">
    <property type="entry name" value="RIBOSOMALS12"/>
</dbReference>
<dbReference type="SUPFAM" id="SSF50249">
    <property type="entry name" value="Nucleic acid-binding proteins"/>
    <property type="match status" value="1"/>
</dbReference>
<dbReference type="PROSITE" id="PS00055">
    <property type="entry name" value="RIBOSOMAL_S12"/>
    <property type="match status" value="1"/>
</dbReference>
<protein>
    <recommendedName>
        <fullName evidence="3">Small ribosomal subunit protein uS12c</fullName>
    </recommendedName>
    <alternativeName>
        <fullName>30S ribosomal protein S12, chloroplastic</fullName>
    </alternativeName>
</protein>